<organism>
    <name type="scientific">Ehrlichia ruminantium (strain Welgevonden)</name>
    <dbReference type="NCBI Taxonomy" id="254945"/>
    <lineage>
        <taxon>Bacteria</taxon>
        <taxon>Pseudomonadati</taxon>
        <taxon>Pseudomonadota</taxon>
        <taxon>Alphaproteobacteria</taxon>
        <taxon>Rickettsiales</taxon>
        <taxon>Anaplasmataceae</taxon>
        <taxon>Ehrlichia</taxon>
    </lineage>
</organism>
<keyword id="KW-0066">ATP synthesis</keyword>
<keyword id="KW-0067">ATP-binding</keyword>
<keyword id="KW-0997">Cell inner membrane</keyword>
<keyword id="KW-1003">Cell membrane</keyword>
<keyword id="KW-0139">CF(1)</keyword>
<keyword id="KW-0375">Hydrogen ion transport</keyword>
<keyword id="KW-0406">Ion transport</keyword>
<keyword id="KW-0472">Membrane</keyword>
<keyword id="KW-0547">Nucleotide-binding</keyword>
<keyword id="KW-1278">Translocase</keyword>
<keyword id="KW-0813">Transport</keyword>
<proteinExistence type="inferred from homology"/>
<evidence type="ECO:0000255" key="1">
    <source>
        <dbReference type="HAMAP-Rule" id="MF_01346"/>
    </source>
</evidence>
<accession>Q5HC95</accession>
<accession>Q5FCN2</accession>
<comment type="function">
    <text evidence="1">Produces ATP from ADP in the presence of a proton gradient across the membrane. The alpha chain is a regulatory subunit.</text>
</comment>
<comment type="catalytic activity">
    <reaction evidence="1">
        <text>ATP + H2O + 4 H(+)(in) = ADP + phosphate + 5 H(+)(out)</text>
        <dbReference type="Rhea" id="RHEA:57720"/>
        <dbReference type="ChEBI" id="CHEBI:15377"/>
        <dbReference type="ChEBI" id="CHEBI:15378"/>
        <dbReference type="ChEBI" id="CHEBI:30616"/>
        <dbReference type="ChEBI" id="CHEBI:43474"/>
        <dbReference type="ChEBI" id="CHEBI:456216"/>
        <dbReference type="EC" id="7.1.2.2"/>
    </reaction>
</comment>
<comment type="subunit">
    <text evidence="1">F-type ATPases have 2 components, CF(1) - the catalytic core - and CF(0) - the membrane proton channel. CF(1) has five subunits: alpha(3), beta(3), gamma(1), delta(1), epsilon(1). CF(0) has three main subunits: a(1), b(2) and c(9-12). The alpha and beta chains form an alternating ring which encloses part of the gamma chain. CF(1) is attached to CF(0) by a central stalk formed by the gamma and epsilon chains, while a peripheral stalk is formed by the delta and b chains.</text>
</comment>
<comment type="subcellular location">
    <subcellularLocation>
        <location evidence="1">Cell inner membrane</location>
        <topology evidence="1">Peripheral membrane protein</topology>
    </subcellularLocation>
</comment>
<comment type="similarity">
    <text evidence="1">Belongs to the ATPase alpha/beta chains family.</text>
</comment>
<dbReference type="EC" id="7.1.2.2" evidence="1"/>
<dbReference type="EMBL" id="CR767821">
    <property type="protein sequence ID" value="CAH57796.1"/>
    <property type="molecule type" value="Genomic_DNA"/>
</dbReference>
<dbReference type="EMBL" id="CR925678">
    <property type="protein sequence ID" value="CAI26571.1"/>
    <property type="molecule type" value="Genomic_DNA"/>
</dbReference>
<dbReference type="RefSeq" id="WP_011154765.1">
    <property type="nucleotide sequence ID" value="NC_005295.2"/>
</dbReference>
<dbReference type="SMR" id="Q5HC95"/>
<dbReference type="GeneID" id="33057962"/>
<dbReference type="KEGG" id="eru:Erum0820"/>
<dbReference type="KEGG" id="erw:ERWE_CDS_00770"/>
<dbReference type="eggNOG" id="COG0056">
    <property type="taxonomic scope" value="Bacteria"/>
</dbReference>
<dbReference type="HOGENOM" id="CLU_010091_2_1_5"/>
<dbReference type="Proteomes" id="UP000001021">
    <property type="component" value="Chromosome"/>
</dbReference>
<dbReference type="GO" id="GO:0005886">
    <property type="term" value="C:plasma membrane"/>
    <property type="evidence" value="ECO:0007669"/>
    <property type="project" value="UniProtKB-SubCell"/>
</dbReference>
<dbReference type="GO" id="GO:0045259">
    <property type="term" value="C:proton-transporting ATP synthase complex"/>
    <property type="evidence" value="ECO:0007669"/>
    <property type="project" value="UniProtKB-KW"/>
</dbReference>
<dbReference type="GO" id="GO:0043531">
    <property type="term" value="F:ADP binding"/>
    <property type="evidence" value="ECO:0007669"/>
    <property type="project" value="TreeGrafter"/>
</dbReference>
<dbReference type="GO" id="GO:0005524">
    <property type="term" value="F:ATP binding"/>
    <property type="evidence" value="ECO:0007669"/>
    <property type="project" value="UniProtKB-UniRule"/>
</dbReference>
<dbReference type="GO" id="GO:0046933">
    <property type="term" value="F:proton-transporting ATP synthase activity, rotational mechanism"/>
    <property type="evidence" value="ECO:0007669"/>
    <property type="project" value="UniProtKB-UniRule"/>
</dbReference>
<dbReference type="CDD" id="cd18113">
    <property type="entry name" value="ATP-synt_F1_alpha_C"/>
    <property type="match status" value="1"/>
</dbReference>
<dbReference type="CDD" id="cd18116">
    <property type="entry name" value="ATP-synt_F1_alpha_N"/>
    <property type="match status" value="1"/>
</dbReference>
<dbReference type="CDD" id="cd01132">
    <property type="entry name" value="F1-ATPase_alpha_CD"/>
    <property type="match status" value="1"/>
</dbReference>
<dbReference type="FunFam" id="1.20.150.20:FF:000001">
    <property type="entry name" value="ATP synthase subunit alpha"/>
    <property type="match status" value="1"/>
</dbReference>
<dbReference type="FunFam" id="3.40.50.300:FF:000002">
    <property type="entry name" value="ATP synthase subunit alpha"/>
    <property type="match status" value="1"/>
</dbReference>
<dbReference type="Gene3D" id="2.40.30.20">
    <property type="match status" value="1"/>
</dbReference>
<dbReference type="Gene3D" id="1.20.150.20">
    <property type="entry name" value="ATP synthase alpha/beta chain, C-terminal domain"/>
    <property type="match status" value="1"/>
</dbReference>
<dbReference type="Gene3D" id="3.40.50.300">
    <property type="entry name" value="P-loop containing nucleotide triphosphate hydrolases"/>
    <property type="match status" value="1"/>
</dbReference>
<dbReference type="HAMAP" id="MF_01346">
    <property type="entry name" value="ATP_synth_alpha_bact"/>
    <property type="match status" value="1"/>
</dbReference>
<dbReference type="InterPro" id="IPR023366">
    <property type="entry name" value="ATP_synth_asu-like_sf"/>
</dbReference>
<dbReference type="InterPro" id="IPR000793">
    <property type="entry name" value="ATP_synth_asu_C"/>
</dbReference>
<dbReference type="InterPro" id="IPR038376">
    <property type="entry name" value="ATP_synth_asu_C_sf"/>
</dbReference>
<dbReference type="InterPro" id="IPR033732">
    <property type="entry name" value="ATP_synth_F1_a_nt-bd_dom"/>
</dbReference>
<dbReference type="InterPro" id="IPR005294">
    <property type="entry name" value="ATP_synth_F1_asu"/>
</dbReference>
<dbReference type="InterPro" id="IPR020003">
    <property type="entry name" value="ATPase_a/bsu_AS"/>
</dbReference>
<dbReference type="InterPro" id="IPR004100">
    <property type="entry name" value="ATPase_F1/V1/A1_a/bsu_N"/>
</dbReference>
<dbReference type="InterPro" id="IPR036121">
    <property type="entry name" value="ATPase_F1/V1/A1_a/bsu_N_sf"/>
</dbReference>
<dbReference type="InterPro" id="IPR000194">
    <property type="entry name" value="ATPase_F1/V1/A1_a/bsu_nucl-bd"/>
</dbReference>
<dbReference type="InterPro" id="IPR027417">
    <property type="entry name" value="P-loop_NTPase"/>
</dbReference>
<dbReference type="NCBIfam" id="TIGR00962">
    <property type="entry name" value="atpA"/>
    <property type="match status" value="1"/>
</dbReference>
<dbReference type="NCBIfam" id="NF009884">
    <property type="entry name" value="PRK13343.1"/>
    <property type="match status" value="1"/>
</dbReference>
<dbReference type="PANTHER" id="PTHR48082">
    <property type="entry name" value="ATP SYNTHASE SUBUNIT ALPHA, MITOCHONDRIAL"/>
    <property type="match status" value="1"/>
</dbReference>
<dbReference type="PANTHER" id="PTHR48082:SF2">
    <property type="entry name" value="ATP SYNTHASE SUBUNIT ALPHA, MITOCHONDRIAL"/>
    <property type="match status" value="1"/>
</dbReference>
<dbReference type="Pfam" id="PF00006">
    <property type="entry name" value="ATP-synt_ab"/>
    <property type="match status" value="1"/>
</dbReference>
<dbReference type="Pfam" id="PF00306">
    <property type="entry name" value="ATP-synt_ab_C"/>
    <property type="match status" value="1"/>
</dbReference>
<dbReference type="Pfam" id="PF02874">
    <property type="entry name" value="ATP-synt_ab_N"/>
    <property type="match status" value="1"/>
</dbReference>
<dbReference type="PIRSF" id="PIRSF039088">
    <property type="entry name" value="F_ATPase_subunit_alpha"/>
    <property type="match status" value="1"/>
</dbReference>
<dbReference type="SUPFAM" id="SSF47917">
    <property type="entry name" value="C-terminal domain of alpha and beta subunits of F1 ATP synthase"/>
    <property type="match status" value="1"/>
</dbReference>
<dbReference type="SUPFAM" id="SSF50615">
    <property type="entry name" value="N-terminal domain of alpha and beta subunits of F1 ATP synthase"/>
    <property type="match status" value="1"/>
</dbReference>
<dbReference type="SUPFAM" id="SSF52540">
    <property type="entry name" value="P-loop containing nucleoside triphosphate hydrolases"/>
    <property type="match status" value="1"/>
</dbReference>
<dbReference type="PROSITE" id="PS00152">
    <property type="entry name" value="ATPASE_ALPHA_BETA"/>
    <property type="match status" value="1"/>
</dbReference>
<protein>
    <recommendedName>
        <fullName evidence="1">ATP synthase subunit alpha</fullName>
        <ecNumber evidence="1">7.1.2.2</ecNumber>
    </recommendedName>
    <alternativeName>
        <fullName evidence="1">ATP synthase F1 sector subunit alpha</fullName>
    </alternativeName>
    <alternativeName>
        <fullName evidence="1">F-ATPase subunit alpha</fullName>
    </alternativeName>
</protein>
<sequence>MISAGEVLKVIKERIENFDGQVKCESVGEVISVKDGIALVYGLEKAKFGEVVAFANGTIGVVLNLDCDTVSIVIFGSENSVGEGDIVKCTNQLMDVPVGLELLGRVVDALGNPIDGLENFDTKTRLPVEIKAPGIIDRQSVTEPLQTGIKVIDMLIPIGRGQRELIIGDRKTGKTAIAIDTIINQKSHNNEVIDKEKVYCIYVAIGQKNSSVARIINKLRESGALEYTIVVVAGASDSASLQYLAPYTACAMGEFFRDNGMHCLIVYDDLSKHAAAYRQMSLLLRRPPGREAYPGDVFFLHSRLLERAAKMSDKKGGGSLTALPIIETQAGDVSAYVPTNVISITDGQIFLESEIFYKGLRPAVNVGLSVSRVGSSAQIKSVKKVAGSIKLSLAQYRELEDFAKFGSDVDVHSQKILDRGRRMMELLKQKQYSPLSVGEQVAVIFAGTSGYLDDISVNDISKFEERLLSELNSNYPDILSSISNNNFTDDIRSLLSKVISKIASSLK</sequence>
<name>ATPA_EHRRW</name>
<feature type="chain" id="PRO_0000238247" description="ATP synthase subunit alpha">
    <location>
        <begin position="1"/>
        <end position="507"/>
    </location>
</feature>
<feature type="binding site" evidence="1">
    <location>
        <begin position="168"/>
        <end position="175"/>
    </location>
    <ligand>
        <name>ATP</name>
        <dbReference type="ChEBI" id="CHEBI:30616"/>
    </ligand>
</feature>
<feature type="site" description="Required for activity" evidence="1">
    <location>
        <position position="369"/>
    </location>
</feature>
<gene>
    <name evidence="1" type="primary">atpA</name>
    <name type="ordered locus">Erum0820</name>
    <name type="ordered locus">ERWE_CDS_00770</name>
</gene>
<reference key="1">
    <citation type="journal article" date="2005" name="Proc. Natl. Acad. Sci. U.S.A.">
        <title>The genome of the heartwater agent Ehrlichia ruminantium contains multiple tandem repeats of actively variable copy number.</title>
        <authorList>
            <person name="Collins N.E."/>
            <person name="Liebenberg J."/>
            <person name="de Villiers E.P."/>
            <person name="Brayton K.A."/>
            <person name="Louw E."/>
            <person name="Pretorius A."/>
            <person name="Faber F.E."/>
            <person name="van Heerden H."/>
            <person name="Josemans A."/>
            <person name="van Kleef M."/>
            <person name="Steyn H.C."/>
            <person name="van Strijp M.F."/>
            <person name="Zweygarth E."/>
            <person name="Jongejan F."/>
            <person name="Maillard J.C."/>
            <person name="Berthier D."/>
            <person name="Botha M."/>
            <person name="Joubert F."/>
            <person name="Corton C.H."/>
            <person name="Thomson N.R."/>
            <person name="Allsopp M.T."/>
            <person name="Allsopp B.A."/>
        </authorList>
    </citation>
    <scope>NUCLEOTIDE SEQUENCE [LARGE SCALE GENOMIC DNA]</scope>
    <source>
        <strain>Welgevonden</strain>
    </source>
</reference>
<reference key="2">
    <citation type="journal article" date="2006" name="J. Bacteriol.">
        <title>Comparative genomic analysis of three strains of Ehrlichia ruminantium reveals an active process of genome size plasticity.</title>
        <authorList>
            <person name="Frutos R."/>
            <person name="Viari A."/>
            <person name="Ferraz C."/>
            <person name="Morgat A."/>
            <person name="Eychenie S."/>
            <person name="Kandassamy Y."/>
            <person name="Chantal I."/>
            <person name="Bensaid A."/>
            <person name="Coissac E."/>
            <person name="Vachiery N."/>
            <person name="Demaille J."/>
            <person name="Martinez D."/>
        </authorList>
    </citation>
    <scope>NUCLEOTIDE SEQUENCE [LARGE SCALE GENOMIC DNA]</scope>
    <source>
        <strain>Welgevonden</strain>
    </source>
</reference>